<reference key="1">
    <citation type="submission" date="2006-09" db="EMBL/GenBank/DDBJ databases">
        <authorList>
            <consortium name="The Klebsiella pneumonia Genome Sequencing Project"/>
            <person name="McClelland M."/>
            <person name="Sanderson E.K."/>
            <person name="Spieth J."/>
            <person name="Clifton W.S."/>
            <person name="Latreille P."/>
            <person name="Sabo A."/>
            <person name="Pepin K."/>
            <person name="Bhonagiri V."/>
            <person name="Porwollik S."/>
            <person name="Ali J."/>
            <person name="Wilson R.K."/>
        </authorList>
    </citation>
    <scope>NUCLEOTIDE SEQUENCE [LARGE SCALE GENOMIC DNA]</scope>
    <source>
        <strain>ATCC 700721 / MGH 78578</strain>
    </source>
</reference>
<comment type="function">
    <text evidence="1">Two distinct, membrane-bound, FAD-containing enzymes are responsible for the catalysis of fumarate and succinate interconversion; fumarate reductase is used in anaerobic growth, and succinate dehydrogenase is used in aerobic growth. Anchors the catalytic components of the fumarate reductase complex to the cell inner membrane, binds quinones.</text>
</comment>
<comment type="subunit">
    <text evidence="1">Part of an enzyme complex containing four subunits: a flavoprotein (FrdA), an iron-sulfur protein (FrdB), and two hydrophobic anchor proteins (FrdC and FrdD).</text>
</comment>
<comment type="subcellular location">
    <subcellularLocation>
        <location evidence="1">Cell inner membrane</location>
        <topology evidence="1">Multi-pass membrane protein</topology>
    </subcellularLocation>
</comment>
<comment type="similarity">
    <text evidence="1">Belongs to the FrdD family.</text>
</comment>
<keyword id="KW-0997">Cell inner membrane</keyword>
<keyword id="KW-1003">Cell membrane</keyword>
<keyword id="KW-0472">Membrane</keyword>
<keyword id="KW-0812">Transmembrane</keyword>
<keyword id="KW-1133">Transmembrane helix</keyword>
<evidence type="ECO:0000255" key="1">
    <source>
        <dbReference type="HAMAP-Rule" id="MF_00709"/>
    </source>
</evidence>
<protein>
    <recommendedName>
        <fullName evidence="1">Fumarate reductase subunit D</fullName>
    </recommendedName>
    <alternativeName>
        <fullName evidence="1">Fumarate reductase 13 kDa hydrophobic protein</fullName>
    </alternativeName>
    <alternativeName>
        <fullName evidence="1">Quinol-fumarate reductase subunit D</fullName>
        <shortName evidence="1">QFR subunit D</shortName>
    </alternativeName>
</protein>
<feature type="chain" id="PRO_1000045553" description="Fumarate reductase subunit D">
    <location>
        <begin position="1"/>
        <end position="119"/>
    </location>
</feature>
<feature type="transmembrane region" description="Helical" evidence="1">
    <location>
        <begin position="24"/>
        <end position="44"/>
    </location>
</feature>
<feature type="transmembrane region" description="Helical" evidence="1">
    <location>
        <begin position="55"/>
        <end position="75"/>
    </location>
</feature>
<feature type="transmembrane region" description="Helical" evidence="1">
    <location>
        <begin position="99"/>
        <end position="119"/>
    </location>
</feature>
<accession>A6TH70</accession>
<sequence>MINPNPKRSDEPVFWGLFGAGGMWGAIVAPVMVLLVGILLPLGLAPADAFSYERVLAFAQSFIGRAFIFLMIVLPLWCGLHRIHHAMHDLKIHVPNGKWVFYGLAAILSVITLVGVLFI</sequence>
<gene>
    <name evidence="1" type="primary">frdD</name>
    <name type="ordered locus">KPN78578_44800</name>
    <name type="ORF">KPN_04550</name>
</gene>
<organism>
    <name type="scientific">Klebsiella pneumoniae subsp. pneumoniae (strain ATCC 700721 / MGH 78578)</name>
    <dbReference type="NCBI Taxonomy" id="272620"/>
    <lineage>
        <taxon>Bacteria</taxon>
        <taxon>Pseudomonadati</taxon>
        <taxon>Pseudomonadota</taxon>
        <taxon>Gammaproteobacteria</taxon>
        <taxon>Enterobacterales</taxon>
        <taxon>Enterobacteriaceae</taxon>
        <taxon>Klebsiella/Raoultella group</taxon>
        <taxon>Klebsiella</taxon>
        <taxon>Klebsiella pneumoniae complex</taxon>
    </lineage>
</organism>
<name>FRDD_KLEP7</name>
<proteinExistence type="inferred from homology"/>
<dbReference type="EMBL" id="CP000647">
    <property type="protein sequence ID" value="ABR79904.1"/>
    <property type="molecule type" value="Genomic_DNA"/>
</dbReference>
<dbReference type="RefSeq" id="WP_002885526.1">
    <property type="nucleotide sequence ID" value="NC_009648.1"/>
</dbReference>
<dbReference type="SMR" id="A6TH70"/>
<dbReference type="STRING" id="272620.KPN_04550"/>
<dbReference type="PaxDb" id="272620-KPN_04550"/>
<dbReference type="EnsemblBacteria" id="ABR79904">
    <property type="protein sequence ID" value="ABR79904"/>
    <property type="gene ID" value="KPN_04550"/>
</dbReference>
<dbReference type="GeneID" id="93275444"/>
<dbReference type="KEGG" id="kpn:KPN_04550"/>
<dbReference type="HOGENOM" id="CLU_168367_0_0_6"/>
<dbReference type="Proteomes" id="UP000000265">
    <property type="component" value="Chromosome"/>
</dbReference>
<dbReference type="GO" id="GO:0045283">
    <property type="term" value="C:fumarate reductase complex"/>
    <property type="evidence" value="ECO:0007669"/>
    <property type="project" value="UniProtKB-UniRule"/>
</dbReference>
<dbReference type="GO" id="GO:0005886">
    <property type="term" value="C:plasma membrane"/>
    <property type="evidence" value="ECO:0007669"/>
    <property type="project" value="UniProtKB-SubCell"/>
</dbReference>
<dbReference type="GO" id="GO:0000104">
    <property type="term" value="F:succinate dehydrogenase activity"/>
    <property type="evidence" value="ECO:0007669"/>
    <property type="project" value="UniProtKB-UniRule"/>
</dbReference>
<dbReference type="GO" id="GO:0006106">
    <property type="term" value="P:fumarate metabolic process"/>
    <property type="evidence" value="ECO:0007669"/>
    <property type="project" value="InterPro"/>
</dbReference>
<dbReference type="CDD" id="cd00547">
    <property type="entry name" value="QFR_TypeD_subunitD"/>
    <property type="match status" value="1"/>
</dbReference>
<dbReference type="FunFam" id="1.20.1300.10:FF:000002">
    <property type="entry name" value="Fumarate reductase subunit D"/>
    <property type="match status" value="1"/>
</dbReference>
<dbReference type="Gene3D" id="1.20.1300.10">
    <property type="entry name" value="Fumarate reductase/succinate dehydrogenase, transmembrane subunit"/>
    <property type="match status" value="1"/>
</dbReference>
<dbReference type="HAMAP" id="MF_00709">
    <property type="entry name" value="Fumarate_red_D"/>
    <property type="match status" value="1"/>
</dbReference>
<dbReference type="InterPro" id="IPR003418">
    <property type="entry name" value="Fumarate_red_D"/>
</dbReference>
<dbReference type="InterPro" id="IPR034804">
    <property type="entry name" value="SQR/QFR_C/D"/>
</dbReference>
<dbReference type="NCBIfam" id="NF003977">
    <property type="entry name" value="PRK05470.1-1"/>
    <property type="match status" value="1"/>
</dbReference>
<dbReference type="Pfam" id="PF02313">
    <property type="entry name" value="Fumarate_red_D"/>
    <property type="match status" value="1"/>
</dbReference>
<dbReference type="PIRSF" id="PIRSF000179">
    <property type="entry name" value="FrdD"/>
    <property type="match status" value="1"/>
</dbReference>
<dbReference type="SUPFAM" id="SSF81343">
    <property type="entry name" value="Fumarate reductase respiratory complex transmembrane subunits"/>
    <property type="match status" value="1"/>
</dbReference>